<sequence>MNEQYSALRSNVSMLGKVLGETIKDALGEHILDRVETIRKLSKSSRAGNEANRQELLTTLQNLSNDELLPVARAFSQFLNLANTAEQYHSISPKGEAASNPEVIARTLRKLKNQPDLNDATIKKAVESLSLELVLTAHPTEITRRTLIHKMGEINNCLKQLDNTDIADYERHQVMRRLRQLIAQSWHTDEIRKQRPSPVDEAKWGFAVVENSLWQGVPNYLRELNEQLEENLGYKLPVDFVPVRFTSWMGGDRDGNPNVTADITRHVLLLSRWKATDLFLKDIHVLVSELSMVDATPELLALVGEEGASEPYRYLMKKLRARLMATQSWLEARLKGEKLPKPAGLLTQNEQLWEPLYACYQSLQACGMGIIANGELLDTLRRVKCFGVPLVRIDIRQESTRHTEALGEITRYLGIGDYESWSEADKQAFLIRELNSKRPLLPRNWEPSNDTREVLETCKVIAEAPKGSIAAYVISMAKTPSDVLAVHLLLKEAGIGFAMPVAPLFETLDDLNNADDVMTQLLNIDWYRGLIQGKQMVMIGYSDSAKDAGVMAASWAQYQAQDALIKTCEKAGIELTLFHGRGGSIGRGGAPAHAALLSQPPGSLKGGLRVTEQGEMIRFKYGLPEVTVSSLSLYTSAILEANLLPPPEPKDSWRHIMDELSVISCETYRGYVRENKDFVPYFRSATPEQELGKLPLGSRPAKRRPTGGVESLRAIPWIFAWTQNRLMLPAWLGAGTALQKVVEDGKQSELEAMCRDWPFFSTRLGMLEMVFSKADLWLADYYDQRLVAKTLWPLGKELRDLLEEDIKVVLAIANDSHLMADLPWIAESIQLRNVYTDPLNVLQAELLYRSRLTEEQGKSPDPRVEQALMVTIAGVAAGMRNTG</sequence>
<proteinExistence type="inferred from homology"/>
<organism>
    <name type="scientific">Salmonella paratyphi B (strain ATCC BAA-1250 / SPB7)</name>
    <dbReference type="NCBI Taxonomy" id="1016998"/>
    <lineage>
        <taxon>Bacteria</taxon>
        <taxon>Pseudomonadati</taxon>
        <taxon>Pseudomonadota</taxon>
        <taxon>Gammaproteobacteria</taxon>
        <taxon>Enterobacterales</taxon>
        <taxon>Enterobacteriaceae</taxon>
        <taxon>Salmonella</taxon>
    </lineage>
</organism>
<name>CAPP_SALPB</name>
<gene>
    <name evidence="1" type="primary">ppc</name>
    <name type="ordered locus">SPAB_05104</name>
</gene>
<protein>
    <recommendedName>
        <fullName evidence="1">Phosphoenolpyruvate carboxylase</fullName>
        <shortName evidence="1">PEPC</shortName>
        <shortName evidence="1">PEPCase</shortName>
        <ecNumber evidence="1">4.1.1.31</ecNumber>
    </recommendedName>
</protein>
<keyword id="KW-0120">Carbon dioxide fixation</keyword>
<keyword id="KW-0456">Lyase</keyword>
<keyword id="KW-0460">Magnesium</keyword>
<reference key="1">
    <citation type="submission" date="2007-11" db="EMBL/GenBank/DDBJ databases">
        <authorList>
            <consortium name="The Salmonella enterica serovar Paratyphi B Genome Sequencing Project"/>
            <person name="McClelland M."/>
            <person name="Sanderson E.K."/>
            <person name="Porwollik S."/>
            <person name="Spieth J."/>
            <person name="Clifton W.S."/>
            <person name="Fulton R."/>
            <person name="Cordes M."/>
            <person name="Wollam A."/>
            <person name="Shah N."/>
            <person name="Pepin K."/>
            <person name="Bhonagiri V."/>
            <person name="Nash W."/>
            <person name="Johnson M."/>
            <person name="Thiruvilangam P."/>
            <person name="Wilson R."/>
        </authorList>
    </citation>
    <scope>NUCLEOTIDE SEQUENCE [LARGE SCALE GENOMIC DNA]</scope>
    <source>
        <strain>ATCC BAA-1250 / SPB7</strain>
    </source>
</reference>
<comment type="function">
    <text evidence="1">Forms oxaloacetate, a four-carbon dicarboxylic acid source for the tricarboxylic acid cycle.</text>
</comment>
<comment type="catalytic activity">
    <reaction evidence="1">
        <text>oxaloacetate + phosphate = phosphoenolpyruvate + hydrogencarbonate</text>
        <dbReference type="Rhea" id="RHEA:28370"/>
        <dbReference type="ChEBI" id="CHEBI:16452"/>
        <dbReference type="ChEBI" id="CHEBI:17544"/>
        <dbReference type="ChEBI" id="CHEBI:43474"/>
        <dbReference type="ChEBI" id="CHEBI:58702"/>
        <dbReference type="EC" id="4.1.1.31"/>
    </reaction>
</comment>
<comment type="cofactor">
    <cofactor evidence="1">
        <name>Mg(2+)</name>
        <dbReference type="ChEBI" id="CHEBI:18420"/>
    </cofactor>
</comment>
<comment type="similarity">
    <text evidence="1">Belongs to the PEPCase type 1 family.</text>
</comment>
<dbReference type="EC" id="4.1.1.31" evidence="1"/>
<dbReference type="EMBL" id="CP000886">
    <property type="protein sequence ID" value="ABX70395.1"/>
    <property type="molecule type" value="Genomic_DNA"/>
</dbReference>
<dbReference type="RefSeq" id="WP_001005548.1">
    <property type="nucleotide sequence ID" value="NC_010102.1"/>
</dbReference>
<dbReference type="SMR" id="A9N0G6"/>
<dbReference type="KEGG" id="spq:SPAB_05104"/>
<dbReference type="PATRIC" id="fig|1016998.12.peg.4790"/>
<dbReference type="HOGENOM" id="CLU_006557_2_0_6"/>
<dbReference type="BioCyc" id="SENT1016998:SPAB_RS20765-MONOMER"/>
<dbReference type="Proteomes" id="UP000008556">
    <property type="component" value="Chromosome"/>
</dbReference>
<dbReference type="GO" id="GO:0005829">
    <property type="term" value="C:cytosol"/>
    <property type="evidence" value="ECO:0007669"/>
    <property type="project" value="TreeGrafter"/>
</dbReference>
<dbReference type="GO" id="GO:0000287">
    <property type="term" value="F:magnesium ion binding"/>
    <property type="evidence" value="ECO:0007669"/>
    <property type="project" value="UniProtKB-UniRule"/>
</dbReference>
<dbReference type="GO" id="GO:0008964">
    <property type="term" value="F:phosphoenolpyruvate carboxylase activity"/>
    <property type="evidence" value="ECO:0007669"/>
    <property type="project" value="UniProtKB-UniRule"/>
</dbReference>
<dbReference type="GO" id="GO:0015977">
    <property type="term" value="P:carbon fixation"/>
    <property type="evidence" value="ECO:0007669"/>
    <property type="project" value="UniProtKB-UniRule"/>
</dbReference>
<dbReference type="GO" id="GO:0006107">
    <property type="term" value="P:oxaloacetate metabolic process"/>
    <property type="evidence" value="ECO:0007669"/>
    <property type="project" value="UniProtKB-UniRule"/>
</dbReference>
<dbReference type="GO" id="GO:0006099">
    <property type="term" value="P:tricarboxylic acid cycle"/>
    <property type="evidence" value="ECO:0007669"/>
    <property type="project" value="InterPro"/>
</dbReference>
<dbReference type="FunFam" id="1.20.1440.90:FF:000002">
    <property type="entry name" value="Phosphoenolpyruvate carboxylase"/>
    <property type="match status" value="1"/>
</dbReference>
<dbReference type="Gene3D" id="1.20.1440.90">
    <property type="entry name" value="Phosphoenolpyruvate/pyruvate domain"/>
    <property type="match status" value="1"/>
</dbReference>
<dbReference type="HAMAP" id="MF_00595">
    <property type="entry name" value="PEPcase_type1"/>
    <property type="match status" value="1"/>
</dbReference>
<dbReference type="InterPro" id="IPR021135">
    <property type="entry name" value="PEP_COase"/>
</dbReference>
<dbReference type="InterPro" id="IPR022805">
    <property type="entry name" value="PEP_COase_bac/pln-type"/>
</dbReference>
<dbReference type="InterPro" id="IPR018129">
    <property type="entry name" value="PEP_COase_Lys_AS"/>
</dbReference>
<dbReference type="InterPro" id="IPR033129">
    <property type="entry name" value="PEPCASE_His_AS"/>
</dbReference>
<dbReference type="InterPro" id="IPR015813">
    <property type="entry name" value="Pyrv/PenolPyrv_kinase-like_dom"/>
</dbReference>
<dbReference type="NCBIfam" id="NF000584">
    <property type="entry name" value="PRK00009.1"/>
    <property type="match status" value="1"/>
</dbReference>
<dbReference type="PANTHER" id="PTHR30523">
    <property type="entry name" value="PHOSPHOENOLPYRUVATE CARBOXYLASE"/>
    <property type="match status" value="1"/>
</dbReference>
<dbReference type="PANTHER" id="PTHR30523:SF6">
    <property type="entry name" value="PHOSPHOENOLPYRUVATE CARBOXYLASE"/>
    <property type="match status" value="1"/>
</dbReference>
<dbReference type="Pfam" id="PF00311">
    <property type="entry name" value="PEPcase"/>
    <property type="match status" value="1"/>
</dbReference>
<dbReference type="PRINTS" id="PR00150">
    <property type="entry name" value="PEPCARBXLASE"/>
</dbReference>
<dbReference type="SUPFAM" id="SSF51621">
    <property type="entry name" value="Phosphoenolpyruvate/pyruvate domain"/>
    <property type="match status" value="1"/>
</dbReference>
<dbReference type="PROSITE" id="PS00781">
    <property type="entry name" value="PEPCASE_1"/>
    <property type="match status" value="1"/>
</dbReference>
<dbReference type="PROSITE" id="PS00393">
    <property type="entry name" value="PEPCASE_2"/>
    <property type="match status" value="1"/>
</dbReference>
<feature type="chain" id="PRO_1000082433" description="Phosphoenolpyruvate carboxylase">
    <location>
        <begin position="1"/>
        <end position="883"/>
    </location>
</feature>
<feature type="active site" evidence="1">
    <location>
        <position position="138"/>
    </location>
</feature>
<feature type="active site" evidence="1">
    <location>
        <position position="546"/>
    </location>
</feature>
<evidence type="ECO:0000255" key="1">
    <source>
        <dbReference type="HAMAP-Rule" id="MF_00595"/>
    </source>
</evidence>
<accession>A9N0G6</accession>